<sequence length="562" mass="60364">MRSDMIKKGDHQAPARSLLHATGALKQPTDMNKPFVAICNSYIDIVPGHVHLRELADIAKEAIREAGAIPFEFNTIGVDDGIAMGHIGMRYSLPSREIIADAAETVINAHWFDGVFYIPNCDKITPGMLLAAVRTNVPAIFCSGGPMKAGLSAQGKALTLSSMFEAVGAFKEGTISKEAFLDMEQNACPTCGSCAGMFTANSMNCLMEVLGLALPYNGTALAVSDQRREMIRQAAFRLVENIKNDIKPRDIITQDAIDDAFALDMAMGGSTNTVLHTLAIANEAGIDYDLERINEIAKKTPYLSKIAPSSSYSMHDVHEAGGVPAIINELMKKDGTLHPDRLTVTGKTLRENNEGKNIKNFDVIHPLENPYDKQGGLSVLFGNLAPKGAVIKVGGVDPSIKVFTGKAICFNSHDEAVEAIDNHTVREGHVVVIRYEGPKGGPGMPEMLAPTSSIVGRGLGKDVALITDGRFSGATRGIAVGHISPEAASGGPIGLIRDGDKITIDLINRTLNVNQSEEELYRRKNQLEPFRAKVKTGYLARYTSLVTSANTGGIMQVPENLI</sequence>
<keyword id="KW-0001">2Fe-2S</keyword>
<keyword id="KW-0028">Amino-acid biosynthesis</keyword>
<keyword id="KW-0100">Branched-chain amino acid biosynthesis</keyword>
<keyword id="KW-0408">Iron</keyword>
<keyword id="KW-0411">Iron-sulfur</keyword>
<keyword id="KW-0456">Lyase</keyword>
<keyword id="KW-0460">Magnesium</keyword>
<keyword id="KW-0479">Metal-binding</keyword>
<accession>Q8CNL6</accession>
<evidence type="ECO:0000255" key="1">
    <source>
        <dbReference type="HAMAP-Rule" id="MF_00012"/>
    </source>
</evidence>
<proteinExistence type="inferred from homology"/>
<comment type="function">
    <text evidence="1">Functions in the biosynthesis of branched-chain amino acids. Catalyzes the dehydration of (2R,3R)-2,3-dihydroxy-3-methylpentanoate (2,3-dihydroxy-3-methylvalerate) into 2-oxo-3-methylpentanoate (2-oxo-3-methylvalerate) and of (2R)-2,3-dihydroxy-3-methylbutanoate (2,3-dihydroxyisovalerate) into 2-oxo-3-methylbutanoate (2-oxoisovalerate), the penultimate precursor to L-isoleucine and L-valine, respectively.</text>
</comment>
<comment type="catalytic activity">
    <reaction evidence="1">
        <text>(2R)-2,3-dihydroxy-3-methylbutanoate = 3-methyl-2-oxobutanoate + H2O</text>
        <dbReference type="Rhea" id="RHEA:24809"/>
        <dbReference type="ChEBI" id="CHEBI:11851"/>
        <dbReference type="ChEBI" id="CHEBI:15377"/>
        <dbReference type="ChEBI" id="CHEBI:49072"/>
        <dbReference type="EC" id="4.2.1.9"/>
    </reaction>
    <physiologicalReaction direction="left-to-right" evidence="1">
        <dbReference type="Rhea" id="RHEA:24810"/>
    </physiologicalReaction>
</comment>
<comment type="catalytic activity">
    <reaction evidence="1">
        <text>(2R,3R)-2,3-dihydroxy-3-methylpentanoate = (S)-3-methyl-2-oxopentanoate + H2O</text>
        <dbReference type="Rhea" id="RHEA:27694"/>
        <dbReference type="ChEBI" id="CHEBI:15377"/>
        <dbReference type="ChEBI" id="CHEBI:35146"/>
        <dbReference type="ChEBI" id="CHEBI:49258"/>
        <dbReference type="EC" id="4.2.1.9"/>
    </reaction>
    <physiologicalReaction direction="left-to-right" evidence="1">
        <dbReference type="Rhea" id="RHEA:27695"/>
    </physiologicalReaction>
</comment>
<comment type="cofactor">
    <cofactor evidence="1">
        <name>[2Fe-2S] cluster</name>
        <dbReference type="ChEBI" id="CHEBI:190135"/>
    </cofactor>
    <text evidence="1">Binds 1 [2Fe-2S] cluster per subunit. This cluster acts as a Lewis acid cofactor.</text>
</comment>
<comment type="cofactor">
    <cofactor evidence="1">
        <name>Mg(2+)</name>
        <dbReference type="ChEBI" id="CHEBI:18420"/>
    </cofactor>
</comment>
<comment type="pathway">
    <text evidence="1">Amino-acid biosynthesis; L-isoleucine biosynthesis; L-isoleucine from 2-oxobutanoate: step 3/4.</text>
</comment>
<comment type="pathway">
    <text evidence="1">Amino-acid biosynthesis; L-valine biosynthesis; L-valine from pyruvate: step 3/4.</text>
</comment>
<comment type="subunit">
    <text evidence="1">Homodimer.</text>
</comment>
<comment type="similarity">
    <text evidence="1">Belongs to the IlvD/Edd family.</text>
</comment>
<reference key="1">
    <citation type="journal article" date="2003" name="Mol. Microbiol.">
        <title>Genome-based analysis of virulence genes in a non-biofilm-forming Staphylococcus epidermidis strain (ATCC 12228).</title>
        <authorList>
            <person name="Zhang Y.-Q."/>
            <person name="Ren S.-X."/>
            <person name="Li H.-L."/>
            <person name="Wang Y.-X."/>
            <person name="Fu G."/>
            <person name="Yang J."/>
            <person name="Qin Z.-Q."/>
            <person name="Miao Y.-G."/>
            <person name="Wang W.-Y."/>
            <person name="Chen R.-S."/>
            <person name="Shen Y."/>
            <person name="Chen Z."/>
            <person name="Yuan Z.-H."/>
            <person name="Zhao G.-P."/>
            <person name="Qu D."/>
            <person name="Danchin A."/>
            <person name="Wen Y.-M."/>
        </authorList>
    </citation>
    <scope>NUCLEOTIDE SEQUENCE [LARGE SCALE GENOMIC DNA]</scope>
    <source>
        <strain>ATCC 12228 / FDA PCI 1200</strain>
    </source>
</reference>
<gene>
    <name evidence="1" type="primary">ilvD</name>
    <name type="ordered locus">SE_1654</name>
</gene>
<dbReference type="EC" id="4.2.1.9" evidence="1"/>
<dbReference type="EMBL" id="AE015929">
    <property type="protein sequence ID" value="AAO05253.1"/>
    <property type="molecule type" value="Genomic_DNA"/>
</dbReference>
<dbReference type="RefSeq" id="NP_765209.1">
    <property type="nucleotide sequence ID" value="NC_004461.1"/>
</dbReference>
<dbReference type="RefSeq" id="WP_001830016.1">
    <property type="nucleotide sequence ID" value="NZ_WBME01000022.1"/>
</dbReference>
<dbReference type="SMR" id="Q8CNL6"/>
<dbReference type="GeneID" id="50018247"/>
<dbReference type="KEGG" id="sep:SE_1654"/>
<dbReference type="PATRIC" id="fig|176280.10.peg.1618"/>
<dbReference type="eggNOG" id="COG0129">
    <property type="taxonomic scope" value="Bacteria"/>
</dbReference>
<dbReference type="HOGENOM" id="CLU_014271_4_2_9"/>
<dbReference type="OrthoDB" id="9807077at2"/>
<dbReference type="UniPathway" id="UPA00047">
    <property type="reaction ID" value="UER00057"/>
</dbReference>
<dbReference type="UniPathway" id="UPA00049">
    <property type="reaction ID" value="UER00061"/>
</dbReference>
<dbReference type="Proteomes" id="UP000001411">
    <property type="component" value="Chromosome"/>
</dbReference>
<dbReference type="GO" id="GO:0005829">
    <property type="term" value="C:cytosol"/>
    <property type="evidence" value="ECO:0007669"/>
    <property type="project" value="TreeGrafter"/>
</dbReference>
<dbReference type="GO" id="GO:0051537">
    <property type="term" value="F:2 iron, 2 sulfur cluster binding"/>
    <property type="evidence" value="ECO:0007669"/>
    <property type="project" value="UniProtKB-UniRule"/>
</dbReference>
<dbReference type="GO" id="GO:0004160">
    <property type="term" value="F:dihydroxy-acid dehydratase activity"/>
    <property type="evidence" value="ECO:0007669"/>
    <property type="project" value="UniProtKB-UniRule"/>
</dbReference>
<dbReference type="GO" id="GO:0000287">
    <property type="term" value="F:magnesium ion binding"/>
    <property type="evidence" value="ECO:0007669"/>
    <property type="project" value="UniProtKB-UniRule"/>
</dbReference>
<dbReference type="GO" id="GO:0009097">
    <property type="term" value="P:isoleucine biosynthetic process"/>
    <property type="evidence" value="ECO:0007669"/>
    <property type="project" value="UniProtKB-UniRule"/>
</dbReference>
<dbReference type="GO" id="GO:0009099">
    <property type="term" value="P:L-valine biosynthetic process"/>
    <property type="evidence" value="ECO:0007669"/>
    <property type="project" value="UniProtKB-UniRule"/>
</dbReference>
<dbReference type="FunFam" id="3.50.30.80:FF:000001">
    <property type="entry name" value="Dihydroxy-acid dehydratase"/>
    <property type="match status" value="1"/>
</dbReference>
<dbReference type="Gene3D" id="3.50.30.80">
    <property type="entry name" value="IlvD/EDD C-terminal domain-like"/>
    <property type="match status" value="1"/>
</dbReference>
<dbReference type="HAMAP" id="MF_00012">
    <property type="entry name" value="IlvD"/>
    <property type="match status" value="1"/>
</dbReference>
<dbReference type="InterPro" id="IPR042096">
    <property type="entry name" value="Dihydro-acid_dehy_C"/>
</dbReference>
<dbReference type="InterPro" id="IPR004404">
    <property type="entry name" value="DihydroxyA_deHydtase"/>
</dbReference>
<dbReference type="InterPro" id="IPR020558">
    <property type="entry name" value="DiOHA_6PGluconate_deHydtase_CS"/>
</dbReference>
<dbReference type="InterPro" id="IPR056740">
    <property type="entry name" value="ILV_EDD_C"/>
</dbReference>
<dbReference type="InterPro" id="IPR000581">
    <property type="entry name" value="ILV_EDD_N"/>
</dbReference>
<dbReference type="InterPro" id="IPR037237">
    <property type="entry name" value="IlvD/EDD_N"/>
</dbReference>
<dbReference type="NCBIfam" id="TIGR00110">
    <property type="entry name" value="ilvD"/>
    <property type="match status" value="1"/>
</dbReference>
<dbReference type="NCBIfam" id="NF002068">
    <property type="entry name" value="PRK00911.1"/>
    <property type="match status" value="1"/>
</dbReference>
<dbReference type="PANTHER" id="PTHR43661">
    <property type="entry name" value="D-XYLONATE DEHYDRATASE"/>
    <property type="match status" value="1"/>
</dbReference>
<dbReference type="PANTHER" id="PTHR43661:SF3">
    <property type="entry name" value="D-XYLONATE DEHYDRATASE YAGF-RELATED"/>
    <property type="match status" value="1"/>
</dbReference>
<dbReference type="Pfam" id="PF24877">
    <property type="entry name" value="ILV_EDD_C"/>
    <property type="match status" value="1"/>
</dbReference>
<dbReference type="Pfam" id="PF00920">
    <property type="entry name" value="ILVD_EDD_N"/>
    <property type="match status" value="1"/>
</dbReference>
<dbReference type="SUPFAM" id="SSF143975">
    <property type="entry name" value="IlvD/EDD N-terminal domain-like"/>
    <property type="match status" value="1"/>
</dbReference>
<dbReference type="SUPFAM" id="SSF52016">
    <property type="entry name" value="LeuD/IlvD-like"/>
    <property type="match status" value="1"/>
</dbReference>
<dbReference type="PROSITE" id="PS00886">
    <property type="entry name" value="ILVD_EDD_1"/>
    <property type="match status" value="1"/>
</dbReference>
<dbReference type="PROSITE" id="PS00887">
    <property type="entry name" value="ILVD_EDD_2"/>
    <property type="match status" value="1"/>
</dbReference>
<organism>
    <name type="scientific">Staphylococcus epidermidis (strain ATCC 12228 / FDA PCI 1200)</name>
    <dbReference type="NCBI Taxonomy" id="176280"/>
    <lineage>
        <taxon>Bacteria</taxon>
        <taxon>Bacillati</taxon>
        <taxon>Bacillota</taxon>
        <taxon>Bacilli</taxon>
        <taxon>Bacillales</taxon>
        <taxon>Staphylococcaceae</taxon>
        <taxon>Staphylococcus</taxon>
    </lineage>
</organism>
<name>ILVD_STAES</name>
<feature type="chain" id="PRO_0000103511" description="Dihydroxy-acid dehydratase">
    <location>
        <begin position="1"/>
        <end position="562"/>
    </location>
</feature>
<feature type="active site" description="Proton acceptor" evidence="1">
    <location>
        <position position="472"/>
    </location>
</feature>
<feature type="binding site" evidence="1">
    <location>
        <position position="80"/>
    </location>
    <ligand>
        <name>Mg(2+)</name>
        <dbReference type="ChEBI" id="CHEBI:18420"/>
    </ligand>
</feature>
<feature type="binding site" evidence="1">
    <location>
        <position position="121"/>
    </location>
    <ligand>
        <name>[2Fe-2S] cluster</name>
        <dbReference type="ChEBI" id="CHEBI:190135"/>
    </ligand>
</feature>
<feature type="binding site" evidence="1">
    <location>
        <position position="122"/>
    </location>
    <ligand>
        <name>Mg(2+)</name>
        <dbReference type="ChEBI" id="CHEBI:18420"/>
    </ligand>
</feature>
<feature type="binding site" description="via carbamate group" evidence="1">
    <location>
        <position position="123"/>
    </location>
    <ligand>
        <name>Mg(2+)</name>
        <dbReference type="ChEBI" id="CHEBI:18420"/>
    </ligand>
</feature>
<feature type="binding site" evidence="1">
    <location>
        <position position="194"/>
    </location>
    <ligand>
        <name>[2Fe-2S] cluster</name>
        <dbReference type="ChEBI" id="CHEBI:190135"/>
    </ligand>
</feature>
<feature type="binding site" evidence="1">
    <location>
        <position position="446"/>
    </location>
    <ligand>
        <name>Mg(2+)</name>
        <dbReference type="ChEBI" id="CHEBI:18420"/>
    </ligand>
</feature>
<feature type="modified residue" description="N6-carboxylysine" evidence="1">
    <location>
        <position position="123"/>
    </location>
</feature>
<protein>
    <recommendedName>
        <fullName evidence="1">Dihydroxy-acid dehydratase</fullName>
        <shortName evidence="1">DAD</shortName>
        <ecNumber evidence="1">4.2.1.9</ecNumber>
    </recommendedName>
</protein>